<dbReference type="EMBL" id="BC085846">
    <property type="protein sequence ID" value="AAH85846.1"/>
    <property type="molecule type" value="mRNA"/>
</dbReference>
<dbReference type="RefSeq" id="NP_001008356.1">
    <property type="nucleotide sequence ID" value="NM_001008355.1"/>
</dbReference>
<dbReference type="SMR" id="Q5U2V8"/>
<dbReference type="FunCoup" id="Q5U2V8">
    <property type="interactions" value="2223"/>
</dbReference>
<dbReference type="IntAct" id="Q5U2V8">
    <property type="interactions" value="1"/>
</dbReference>
<dbReference type="STRING" id="10116.ENSRNOP00000013488"/>
<dbReference type="iPTMnet" id="Q5U2V8"/>
<dbReference type="PhosphoSitePlus" id="Q5U2V8"/>
<dbReference type="jPOST" id="Q5U2V8"/>
<dbReference type="PaxDb" id="10116-ENSRNOP00000013488"/>
<dbReference type="Ensembl" id="ENSRNOT00000013488.5">
    <property type="protein sequence ID" value="ENSRNOP00000013488.2"/>
    <property type="gene ID" value="ENSRNOG00000009934.5"/>
</dbReference>
<dbReference type="GeneID" id="312640"/>
<dbReference type="KEGG" id="rno:312640"/>
<dbReference type="UCSC" id="RGD:1311566">
    <property type="organism name" value="rat"/>
</dbReference>
<dbReference type="AGR" id="RGD:1311566"/>
<dbReference type="CTD" id="55831"/>
<dbReference type="RGD" id="1311566">
    <property type="gene designation" value="Emc3"/>
</dbReference>
<dbReference type="eggNOG" id="KOG3188">
    <property type="taxonomic scope" value="Eukaryota"/>
</dbReference>
<dbReference type="GeneTree" id="ENSGT00390000005780"/>
<dbReference type="HOGENOM" id="CLU_060791_0_0_1"/>
<dbReference type="InParanoid" id="Q5U2V8"/>
<dbReference type="OMA" id="DSINMID"/>
<dbReference type="OrthoDB" id="6745403at2759"/>
<dbReference type="PhylomeDB" id="Q5U2V8"/>
<dbReference type="Reactome" id="R-RNO-8980692">
    <property type="pathway name" value="RHOA GTPase cycle"/>
</dbReference>
<dbReference type="PRO" id="PR:Q5U2V8"/>
<dbReference type="Proteomes" id="UP000002494">
    <property type="component" value="Chromosome 4"/>
</dbReference>
<dbReference type="Bgee" id="ENSRNOG00000009934">
    <property type="expression patterns" value="Expressed in ovary and 20 other cell types or tissues"/>
</dbReference>
<dbReference type="GO" id="GO:0072546">
    <property type="term" value="C:EMC complex"/>
    <property type="evidence" value="ECO:0000250"/>
    <property type="project" value="UniProtKB"/>
</dbReference>
<dbReference type="GO" id="GO:0005789">
    <property type="term" value="C:endoplasmic reticulum membrane"/>
    <property type="evidence" value="ECO:0000250"/>
    <property type="project" value="UniProtKB"/>
</dbReference>
<dbReference type="GO" id="GO:0016020">
    <property type="term" value="C:membrane"/>
    <property type="evidence" value="ECO:0000250"/>
    <property type="project" value="UniProtKB"/>
</dbReference>
<dbReference type="GO" id="GO:0032977">
    <property type="term" value="F:membrane insertase activity"/>
    <property type="evidence" value="ECO:0007669"/>
    <property type="project" value="Ensembl"/>
</dbReference>
<dbReference type="GO" id="GO:0045050">
    <property type="term" value="P:protein insertion into ER membrane by stop-transfer membrane-anchor sequence"/>
    <property type="evidence" value="ECO:0000250"/>
    <property type="project" value="UniProtKB"/>
</dbReference>
<dbReference type="GO" id="GO:0071816">
    <property type="term" value="P:tail-anchored membrane protein insertion into ER membrane"/>
    <property type="evidence" value="ECO:0000250"/>
    <property type="project" value="UniProtKB"/>
</dbReference>
<dbReference type="InterPro" id="IPR008568">
    <property type="entry name" value="EMC3"/>
</dbReference>
<dbReference type="InterPro" id="IPR002809">
    <property type="entry name" value="EMC3/TMCO1"/>
</dbReference>
<dbReference type="PANTHER" id="PTHR13116">
    <property type="entry name" value="ER MEMBRANE PROTEIN COMPLEX SUBUNIT 3"/>
    <property type="match status" value="1"/>
</dbReference>
<dbReference type="PANTHER" id="PTHR13116:SF10">
    <property type="entry name" value="ER MEMBRANE PROTEIN COMPLEX SUBUNIT 3"/>
    <property type="match status" value="1"/>
</dbReference>
<dbReference type="Pfam" id="PF01956">
    <property type="entry name" value="EMC3_TMCO1"/>
    <property type="match status" value="1"/>
</dbReference>
<dbReference type="PIRSF" id="PIRSF010045">
    <property type="entry name" value="DUF850_TM_euk"/>
    <property type="match status" value="1"/>
</dbReference>
<dbReference type="SMART" id="SM01415">
    <property type="entry name" value="DUF106"/>
    <property type="match status" value="1"/>
</dbReference>
<keyword id="KW-0256">Endoplasmic reticulum</keyword>
<keyword id="KW-0472">Membrane</keyword>
<keyword id="KW-1185">Reference proteome</keyword>
<keyword id="KW-0812">Transmembrane</keyword>
<keyword id="KW-1133">Transmembrane helix</keyword>
<reference key="1">
    <citation type="journal article" date="2004" name="Genome Res.">
        <title>The status, quality, and expansion of the NIH full-length cDNA project: the Mammalian Gene Collection (MGC).</title>
        <authorList>
            <consortium name="The MGC Project Team"/>
        </authorList>
    </citation>
    <scope>NUCLEOTIDE SEQUENCE [LARGE SCALE MRNA]</scope>
    <source>
        <tissue>Heart</tissue>
    </source>
</reference>
<evidence type="ECO:0000250" key="1">
    <source>
        <dbReference type="UniProtKB" id="Q9P0I2"/>
    </source>
</evidence>
<evidence type="ECO:0000305" key="2"/>
<feature type="initiator methionine" description="Removed" evidence="1">
    <location>
        <position position="1"/>
    </location>
</feature>
<feature type="chain" id="PRO_0000211409" description="ER membrane protein complex subunit 3">
    <location>
        <begin position="2"/>
        <end position="261"/>
    </location>
</feature>
<feature type="topological domain" description="Lumenal" evidence="1">
    <location>
        <begin position="2"/>
        <end position="14"/>
    </location>
</feature>
<feature type="transmembrane region" description="Helical" evidence="1">
    <location>
        <begin position="15"/>
        <end position="38"/>
    </location>
</feature>
<feature type="topological domain" description="Cytoplasmic" evidence="1">
    <location>
        <begin position="39"/>
        <end position="114"/>
    </location>
</feature>
<feature type="transmembrane region" description="Helical" evidence="1">
    <location>
        <begin position="115"/>
        <end position="130"/>
    </location>
</feature>
<feature type="topological domain" description="Lumenal" evidence="1">
    <location>
        <begin position="131"/>
        <end position="168"/>
    </location>
</feature>
<feature type="transmembrane region" description="Helical" evidence="1">
    <location>
        <begin position="169"/>
        <end position="187"/>
    </location>
</feature>
<feature type="topological domain" description="Cytoplasmic" evidence="1">
    <location>
        <begin position="188"/>
        <end position="261"/>
    </location>
</feature>
<accession>Q5U2V8</accession>
<protein>
    <recommendedName>
        <fullName>ER membrane protein complex subunit 3</fullName>
    </recommendedName>
    <alternativeName>
        <fullName>Transmembrane protein 111</fullName>
    </alternativeName>
</protein>
<proteinExistence type="evidence at transcript level"/>
<sequence length="261" mass="29980">MAGPELLLDSNIRLWVVLPIVIITFFVGMIRHYVSILLQSDKKLTQEQVSDSQVLIRSRVLRENGKYIPKQSFLTRKYYFNNPEDGFFKKTKRKVVPPSPMTDPTMLTDMMKGNVTNVLPMILIGGWINMTFSGFVTTKVPFPLTLRFKPMLQQGIELLTLDASWVSSASWYFLNVFGLRSIYSLILGQDNAADQSRMMQEQMTGAAMAMPADTNKAFKTEWEALELTDHQWALDDVEEELMARDLHFEGMFKKELQTSIF</sequence>
<name>EMC3_RAT</name>
<comment type="function">
    <text evidence="1">Part of the endoplasmic reticulum membrane protein complex (EMC) that enables the energy-independent insertion into endoplasmic reticulum membranes of newly synthesized membrane proteins. Preferentially accommodates proteins with transmembrane domains that are weakly hydrophobic or contain destabilizing features such as charged and aromatic residues. Involved in the cotranslational insertion of multi-pass membrane proteins in which stop-transfer membrane-anchor sequences become ER membrane spanning helices. It is also required for the post-translational insertion of tail-anchored/TA proteins in endoplasmic reticulum membranes. By mediating the proper cotranslational insertion of N-terminal transmembrane domains in an N-exo topology, with translocated N-terminus in the lumen of the ER, controls the topology of multi-pass membrane proteins like the G protein-coupled receptors. By regulating the insertion of various proteins in membranes, it is indirectly involved in many cellular processes.</text>
</comment>
<comment type="subunit">
    <text evidence="1">Component of the ER membrane protein complex (EMC).</text>
</comment>
<comment type="subcellular location">
    <subcellularLocation>
        <location evidence="1">Endoplasmic reticulum membrane</location>
        <topology evidence="1">Multi-pass membrane protein</topology>
    </subcellularLocation>
</comment>
<comment type="similarity">
    <text evidence="2">Belongs to the EMC3 family.</text>
</comment>
<organism>
    <name type="scientific">Rattus norvegicus</name>
    <name type="common">Rat</name>
    <dbReference type="NCBI Taxonomy" id="10116"/>
    <lineage>
        <taxon>Eukaryota</taxon>
        <taxon>Metazoa</taxon>
        <taxon>Chordata</taxon>
        <taxon>Craniata</taxon>
        <taxon>Vertebrata</taxon>
        <taxon>Euteleostomi</taxon>
        <taxon>Mammalia</taxon>
        <taxon>Eutheria</taxon>
        <taxon>Euarchontoglires</taxon>
        <taxon>Glires</taxon>
        <taxon>Rodentia</taxon>
        <taxon>Myomorpha</taxon>
        <taxon>Muroidea</taxon>
        <taxon>Muridae</taxon>
        <taxon>Murinae</taxon>
        <taxon>Rattus</taxon>
    </lineage>
</organism>
<gene>
    <name type="primary">Emc3</name>
    <name type="synonym">Tmem111</name>
</gene>